<sequence length="109" mass="12188">MSITDILSAEDIAAALQECQDPDTFEPQKFFQTSGLSKMSASQVKDIFRFIDNDQSGYLDGDELKYFLQKFQSDARELTESETKSLMDAADNDGDGKIGADEFQEMVHS</sequence>
<gene>
    <name type="primary">Ocm</name>
</gene>
<evidence type="ECO:0000255" key="1">
    <source>
        <dbReference type="PROSITE-ProRule" id="PRU00448"/>
    </source>
</evidence>
<evidence type="ECO:0000269" key="2">
    <source>
    </source>
</evidence>
<evidence type="ECO:0000269" key="3">
    <source>
    </source>
</evidence>
<evidence type="ECO:0000269" key="4">
    <source>
    </source>
</evidence>
<evidence type="ECO:0000305" key="5"/>
<evidence type="ECO:0007744" key="6">
    <source>
        <dbReference type="PDB" id="1OMD"/>
    </source>
</evidence>
<evidence type="ECO:0007744" key="7">
    <source>
        <dbReference type="PDB" id="1RRO"/>
    </source>
</evidence>
<evidence type="ECO:0007744" key="8">
    <source>
        <dbReference type="PDB" id="2NLN"/>
    </source>
</evidence>
<evidence type="ECO:0007829" key="9">
    <source>
        <dbReference type="PDB" id="1RRO"/>
    </source>
</evidence>
<proteinExistence type="evidence at protein level"/>
<organism>
    <name type="scientific">Rattus norvegicus</name>
    <name type="common">Rat</name>
    <dbReference type="NCBI Taxonomy" id="10116"/>
    <lineage>
        <taxon>Eukaryota</taxon>
        <taxon>Metazoa</taxon>
        <taxon>Chordata</taxon>
        <taxon>Craniata</taxon>
        <taxon>Vertebrata</taxon>
        <taxon>Euteleostomi</taxon>
        <taxon>Mammalia</taxon>
        <taxon>Eutheria</taxon>
        <taxon>Euarchontoglires</taxon>
        <taxon>Glires</taxon>
        <taxon>Rodentia</taxon>
        <taxon>Myomorpha</taxon>
        <taxon>Muroidea</taxon>
        <taxon>Muridae</taxon>
        <taxon>Murinae</taxon>
        <taxon>Rattus</taxon>
    </lineage>
</organism>
<protein>
    <recommendedName>
        <fullName>Oncomodulin</fullName>
        <shortName>OM</shortName>
    </recommendedName>
    <alternativeName>
        <fullName>Parvalbumin beta</fullName>
    </alternativeName>
</protein>
<reference key="1">
    <citation type="journal article" date="1987" name="J. Biol. Chem.">
        <title>A complete complementary DNA for the oncodevelopmental calcium-binding protein, oncomodulin.</title>
        <authorList>
            <person name="Gillen M.F."/>
            <person name="Banville D."/>
            <person name="Rutledge R.G."/>
            <person name="Narang S."/>
            <person name="Seligy V.L."/>
            <person name="Whitfield J.F."/>
            <person name="McManus J.P."/>
        </authorList>
    </citation>
    <scope>NUCLEOTIDE SEQUENCE [MRNA]</scope>
</reference>
<reference key="2">
    <citation type="journal article" date="1989" name="J. Mol. Biol.">
        <title>Retroviral long terminal repeat is the promoter of the gene encoding the tumor-associated calcium-binding protein oncomodulin in the rat.</title>
        <authorList>
            <person name="Banville D."/>
            <person name="Boie Y."/>
        </authorList>
    </citation>
    <scope>NUCLEOTIDE SEQUENCE</scope>
    <source>
        <strain>Buffalo</strain>
    </source>
</reference>
<reference key="3">
    <citation type="journal article" date="1983" name="Eur. J. Biochem.">
        <title>The complete amino acid sequence of oncomodulin -- a parvalbumin-like calcium-binding protein from Morris hepatoma 5123tc.</title>
        <authorList>
            <person name="McManus J.P."/>
            <person name="Watson D.C."/>
            <person name="Yaguchi M."/>
        </authorList>
    </citation>
    <scope>PROTEIN SEQUENCE OF 2-109</scope>
    <scope>ACETYLATION AT SER-2</scope>
</reference>
<reference key="4">
    <citation type="journal article" date="1987" name="J. Biol. Chem.">
        <title>Oncomodulin. 1H NMR and optical stopped-flow spectroscopic studies of its solution conformation and metal-binding properties.</title>
        <authorList>
            <person name="Williams T.C."/>
            <person name="Corson D.C."/>
            <person name="Sykes B.D."/>
            <person name="McManus J.P."/>
        </authorList>
    </citation>
    <scope>CALCIUM-BINDING</scope>
</reference>
<reference evidence="6" key="5">
    <citation type="journal article" date="1990" name="J. Mol. Biol.">
        <title>Structure of oncomodulin refined at 1.85-A resolution. An example of extensive molecular aggregation via Ca2+.</title>
        <authorList>
            <person name="Ahmed F.R."/>
            <person name="Przybylska M."/>
            <person name="Rose D.R."/>
            <person name="Birnbaum G.I."/>
            <person name="Pippy M.E."/>
            <person name="McManus J.P."/>
        </authorList>
    </citation>
    <scope>X-RAY CRYSTALLOGRAPHY (1.85 ANGSTROMS) OF 2-109 IN COMPLEX WITH CA(2+)</scope>
</reference>
<reference evidence="7" key="6">
    <citation type="journal article" date="1993" name="J. Mol. Biol.">
        <title>Refinement of recombinant oncomodulin at 1.30 A resolution.</title>
        <authorList>
            <person name="Ahmed F.R."/>
            <person name="Rose D.R."/>
            <person name="Evans S.V."/>
            <person name="Pippy M.E."/>
            <person name="To R."/>
        </authorList>
    </citation>
    <scope>X-RAY CRYSTALLOGRAPHY (1.30 ANGSTROMS) OF 2-109 IN COMPLEX WITH CA(2+)</scope>
</reference>
<reference evidence="8" key="7">
    <citation type="journal article" date="2007" name="Protein Sci.">
        <title>Solution structure of Ca2+-free rat beta-parvalbumin (oncomodulin).</title>
        <authorList>
            <person name="Henzl M.T."/>
            <person name="Tanner J.J."/>
        </authorList>
    </citation>
    <scope>STRUCTURE BY NMR OF 2-109</scope>
</reference>
<name>ONCO_RAT</name>
<comment type="function">
    <text>Has some calmodulin-like activity with respect to enzyme activation and growth regulation. Binds two calcium ions.</text>
</comment>
<comment type="tissue specificity">
    <text>Found in tumor tissues and not detected in normal tissues.</text>
</comment>
<comment type="similarity">
    <text evidence="5">Belongs to the parvalbumin family.</text>
</comment>
<dbReference type="EMBL" id="J02705">
    <property type="protein sequence ID" value="AAA41756.1"/>
    <property type="molecule type" value="mRNA"/>
</dbReference>
<dbReference type="EMBL" id="X15836">
    <property type="protein sequence ID" value="CAA33840.1"/>
    <property type="molecule type" value="Genomic_DNA"/>
</dbReference>
<dbReference type="EMBL" id="X15837">
    <property type="protein sequence ID" value="CAA33840.1"/>
    <property type="status" value="JOINED"/>
    <property type="molecule type" value="Genomic_DNA"/>
</dbReference>
<dbReference type="EMBL" id="X15838">
    <property type="protein sequence ID" value="CAA33840.1"/>
    <property type="status" value="JOINED"/>
    <property type="molecule type" value="Genomic_DNA"/>
</dbReference>
<dbReference type="PIR" id="S04616">
    <property type="entry name" value="PVRTO"/>
</dbReference>
<dbReference type="RefSeq" id="NP_037127.1">
    <property type="nucleotide sequence ID" value="NM_012995.2"/>
</dbReference>
<dbReference type="RefSeq" id="XP_063127153.1">
    <property type="nucleotide sequence ID" value="XM_063271083.1"/>
</dbReference>
<dbReference type="RefSeq" id="XP_063127154.1">
    <property type="nucleotide sequence ID" value="XM_063271084.1"/>
</dbReference>
<dbReference type="RefSeq" id="XP_063127155.1">
    <property type="nucleotide sequence ID" value="XM_063271085.1"/>
</dbReference>
<dbReference type="PDB" id="1OMD">
    <property type="method" value="X-ray"/>
    <property type="resolution" value="1.85 A"/>
    <property type="chains" value="A=2-109"/>
</dbReference>
<dbReference type="PDB" id="1RRO">
    <property type="method" value="X-ray"/>
    <property type="resolution" value="1.30 A"/>
    <property type="chains" value="A=2-109"/>
</dbReference>
<dbReference type="PDB" id="2NLN">
    <property type="method" value="NMR"/>
    <property type="chains" value="A=2-109"/>
</dbReference>
<dbReference type="PDBsum" id="1OMD"/>
<dbReference type="PDBsum" id="1RRO"/>
<dbReference type="PDBsum" id="2NLN"/>
<dbReference type="BMRB" id="P02631"/>
<dbReference type="SMR" id="P02631"/>
<dbReference type="STRING" id="10116.ENSRNOP00000040755"/>
<dbReference type="iPTMnet" id="P02631"/>
<dbReference type="PhosphoSitePlus" id="P02631"/>
<dbReference type="PaxDb" id="10116-ENSRNOP00000040755"/>
<dbReference type="Ensembl" id="ENSRNOT00000092601.2">
    <property type="protein sequence ID" value="ENSRNOP00000075788.1"/>
    <property type="gene ID" value="ENSRNOG00000001031.8"/>
</dbReference>
<dbReference type="GeneID" id="25503"/>
<dbReference type="KEGG" id="rno:25503"/>
<dbReference type="AGR" id="RGD:3222"/>
<dbReference type="CTD" id="654231"/>
<dbReference type="RGD" id="3222">
    <property type="gene designation" value="Ocm"/>
</dbReference>
<dbReference type="eggNOG" id="KOG0027">
    <property type="taxonomic scope" value="Eukaryota"/>
</dbReference>
<dbReference type="GeneTree" id="ENSGT00940000161875"/>
<dbReference type="HOGENOM" id="CLU_157356_0_0_1"/>
<dbReference type="InParanoid" id="P02631"/>
<dbReference type="OMA" id="CTCISIL"/>
<dbReference type="OrthoDB" id="26525at2759"/>
<dbReference type="PhylomeDB" id="P02631"/>
<dbReference type="TreeFam" id="TF332342"/>
<dbReference type="EvolutionaryTrace" id="P02631"/>
<dbReference type="PRO" id="PR:P02631"/>
<dbReference type="Proteomes" id="UP000002494">
    <property type="component" value="Chromosome 12"/>
</dbReference>
<dbReference type="Bgee" id="ENSRNOG00000001031">
    <property type="expression patterns" value="Expressed in esophagus and 9 other cell types or tissues"/>
</dbReference>
<dbReference type="GO" id="GO:0032437">
    <property type="term" value="C:cuticular plate"/>
    <property type="evidence" value="ECO:0000314"/>
    <property type="project" value="RGD"/>
</dbReference>
<dbReference type="GO" id="GO:0005737">
    <property type="term" value="C:cytoplasm"/>
    <property type="evidence" value="ECO:0000318"/>
    <property type="project" value="GO_Central"/>
</dbReference>
<dbReference type="GO" id="GO:0005615">
    <property type="term" value="C:extracellular space"/>
    <property type="evidence" value="ECO:0000314"/>
    <property type="project" value="CAFA"/>
</dbReference>
<dbReference type="GO" id="GO:0032991">
    <property type="term" value="C:protein-containing complex"/>
    <property type="evidence" value="ECO:0000314"/>
    <property type="project" value="RGD"/>
</dbReference>
<dbReference type="GO" id="GO:0032420">
    <property type="term" value="C:stereocilium"/>
    <property type="evidence" value="ECO:0000314"/>
    <property type="project" value="RGD"/>
</dbReference>
<dbReference type="GO" id="GO:0099512">
    <property type="term" value="C:supramolecular fiber"/>
    <property type="evidence" value="ECO:0000314"/>
    <property type="project" value="CAFA"/>
</dbReference>
<dbReference type="GO" id="GO:0031982">
    <property type="term" value="C:vesicle"/>
    <property type="evidence" value="ECO:0000314"/>
    <property type="project" value="CAFA"/>
</dbReference>
<dbReference type="GO" id="GO:0005509">
    <property type="term" value="F:calcium ion binding"/>
    <property type="evidence" value="ECO:0000314"/>
    <property type="project" value="CAFA"/>
</dbReference>
<dbReference type="GO" id="GO:0042802">
    <property type="term" value="F:identical protein binding"/>
    <property type="evidence" value="ECO:0000353"/>
    <property type="project" value="RGD"/>
</dbReference>
<dbReference type="GO" id="GO:0042803">
    <property type="term" value="F:protein homodimerization activity"/>
    <property type="evidence" value="ECO:0000314"/>
    <property type="project" value="CAFA"/>
</dbReference>
<dbReference type="GO" id="GO:0044877">
    <property type="term" value="F:protein-containing complex binding"/>
    <property type="evidence" value="ECO:0000314"/>
    <property type="project" value="RGD"/>
</dbReference>
<dbReference type="GO" id="GO:0090102">
    <property type="term" value="P:cochlea development"/>
    <property type="evidence" value="ECO:0000270"/>
    <property type="project" value="RGD"/>
</dbReference>
<dbReference type="GO" id="GO:0009611">
    <property type="term" value="P:response to wounding"/>
    <property type="evidence" value="ECO:0000314"/>
    <property type="project" value="CAFA"/>
</dbReference>
<dbReference type="CDD" id="cd16255">
    <property type="entry name" value="EFh_parvalbumin_beta"/>
    <property type="match status" value="1"/>
</dbReference>
<dbReference type="DisProt" id="DP00730"/>
<dbReference type="FunFam" id="1.10.238.10:FF:000060">
    <property type="entry name" value="Parvalbumin, thymic"/>
    <property type="match status" value="1"/>
</dbReference>
<dbReference type="Gene3D" id="1.10.238.10">
    <property type="entry name" value="EF-hand"/>
    <property type="match status" value="1"/>
</dbReference>
<dbReference type="InterPro" id="IPR011992">
    <property type="entry name" value="EF-hand-dom_pair"/>
</dbReference>
<dbReference type="InterPro" id="IPR018247">
    <property type="entry name" value="EF_Hand_1_Ca_BS"/>
</dbReference>
<dbReference type="InterPro" id="IPR002048">
    <property type="entry name" value="EF_hand_dom"/>
</dbReference>
<dbReference type="InterPro" id="IPR008080">
    <property type="entry name" value="Parvalbumin"/>
</dbReference>
<dbReference type="PANTHER" id="PTHR11653:SF4">
    <property type="entry name" value="ONCOMODULIN-2-RELATED"/>
    <property type="match status" value="1"/>
</dbReference>
<dbReference type="PANTHER" id="PTHR11653">
    <property type="entry name" value="PARVALBUMIN ALPHA"/>
    <property type="match status" value="1"/>
</dbReference>
<dbReference type="Pfam" id="PF13499">
    <property type="entry name" value="EF-hand_7"/>
    <property type="match status" value="1"/>
</dbReference>
<dbReference type="PRINTS" id="PR01697">
    <property type="entry name" value="PARVALBUMIN"/>
</dbReference>
<dbReference type="SMART" id="SM00054">
    <property type="entry name" value="EFh"/>
    <property type="match status" value="2"/>
</dbReference>
<dbReference type="SUPFAM" id="SSF47473">
    <property type="entry name" value="EF-hand"/>
    <property type="match status" value="1"/>
</dbReference>
<dbReference type="PROSITE" id="PS00018">
    <property type="entry name" value="EF_HAND_1"/>
    <property type="match status" value="2"/>
</dbReference>
<dbReference type="PROSITE" id="PS50222">
    <property type="entry name" value="EF_HAND_2"/>
    <property type="match status" value="2"/>
</dbReference>
<keyword id="KW-0002">3D-structure</keyword>
<keyword id="KW-0007">Acetylation</keyword>
<keyword id="KW-0106">Calcium</keyword>
<keyword id="KW-0903">Direct protein sequencing</keyword>
<keyword id="KW-0479">Metal-binding</keyword>
<keyword id="KW-1185">Reference proteome</keyword>
<keyword id="KW-0677">Repeat</keyword>
<accession>P02631</accession>
<feature type="initiator methionine" description="Removed" evidence="3">
    <location>
        <position position="1"/>
    </location>
</feature>
<feature type="chain" id="PRO_0000073584" description="Oncomodulin">
    <location>
        <begin position="2"/>
        <end position="109"/>
    </location>
</feature>
<feature type="domain" description="EF-hand 1" evidence="1">
    <location>
        <begin position="39"/>
        <end position="74"/>
    </location>
</feature>
<feature type="domain" description="EF-hand 2" evidence="1">
    <location>
        <begin position="78"/>
        <end position="109"/>
    </location>
</feature>
<feature type="binding site" evidence="1 2 4 6 7">
    <location>
        <position position="52"/>
    </location>
    <ligand>
        <name>Ca(2+)</name>
        <dbReference type="ChEBI" id="CHEBI:29108"/>
        <label>1</label>
    </ligand>
</feature>
<feature type="binding site" evidence="1 2 4 6 7">
    <location>
        <position position="54"/>
    </location>
    <ligand>
        <name>Ca(2+)</name>
        <dbReference type="ChEBI" id="CHEBI:29108"/>
        <label>1</label>
    </ligand>
</feature>
<feature type="binding site" evidence="1 2 4 6 7">
    <location>
        <position position="56"/>
    </location>
    <ligand>
        <name>Ca(2+)</name>
        <dbReference type="ChEBI" id="CHEBI:29108"/>
        <label>1</label>
    </ligand>
</feature>
<feature type="binding site" evidence="1 2 4 6 7">
    <location>
        <position position="58"/>
    </location>
    <ligand>
        <name>Ca(2+)</name>
        <dbReference type="ChEBI" id="CHEBI:29108"/>
        <label>1</label>
    </ligand>
</feature>
<feature type="binding site" evidence="1 2 4 6 7">
    <location>
        <position position="63"/>
    </location>
    <ligand>
        <name>Ca(2+)</name>
        <dbReference type="ChEBI" id="CHEBI:29108"/>
        <label>1</label>
    </ligand>
</feature>
<feature type="binding site" evidence="1 2 4 6 7">
    <location>
        <position position="91"/>
    </location>
    <ligand>
        <name>Ca(2+)</name>
        <dbReference type="ChEBI" id="CHEBI:29108"/>
        <label>2</label>
    </ligand>
</feature>
<feature type="binding site" evidence="1 2 4 6 7">
    <location>
        <position position="93"/>
    </location>
    <ligand>
        <name>Ca(2+)</name>
        <dbReference type="ChEBI" id="CHEBI:29108"/>
        <label>2</label>
    </ligand>
</feature>
<feature type="binding site" evidence="1 2 4 6 7">
    <location>
        <position position="95"/>
    </location>
    <ligand>
        <name>Ca(2+)</name>
        <dbReference type="ChEBI" id="CHEBI:29108"/>
        <label>2</label>
    </ligand>
</feature>
<feature type="binding site" evidence="1 2 4 6 7">
    <location>
        <position position="97"/>
    </location>
    <ligand>
        <name>Ca(2+)</name>
        <dbReference type="ChEBI" id="CHEBI:29108"/>
        <label>2</label>
    </ligand>
</feature>
<feature type="binding site" evidence="1 2 4 6 7">
    <location>
        <position position="102"/>
    </location>
    <ligand>
        <name>Ca(2+)</name>
        <dbReference type="ChEBI" id="CHEBI:29108"/>
        <label>2</label>
    </ligand>
</feature>
<feature type="modified residue" description="N-acetylserine" evidence="3">
    <location>
        <position position="2"/>
    </location>
</feature>
<feature type="sequence conflict" description="In Ref. 3; AA sequence." evidence="5" ref="3">
    <original>E</original>
    <variation>Q</variation>
    <location>
        <position position="26"/>
    </location>
</feature>
<feature type="helix" evidence="9">
    <location>
        <begin position="3"/>
        <end position="5"/>
    </location>
</feature>
<feature type="helix" evidence="9">
    <location>
        <begin position="9"/>
        <end position="18"/>
    </location>
</feature>
<feature type="helix" evidence="9">
    <location>
        <begin position="27"/>
        <end position="34"/>
    </location>
</feature>
<feature type="helix" evidence="9">
    <location>
        <begin position="36"/>
        <end position="38"/>
    </location>
</feature>
<feature type="helix" evidence="9">
    <location>
        <begin position="41"/>
        <end position="51"/>
    </location>
</feature>
<feature type="strand" evidence="9">
    <location>
        <begin position="56"/>
        <end position="59"/>
    </location>
</feature>
<feature type="helix" evidence="9">
    <location>
        <begin position="62"/>
        <end position="65"/>
    </location>
</feature>
<feature type="helix" evidence="9">
    <location>
        <begin position="67"/>
        <end position="70"/>
    </location>
</feature>
<feature type="helix" evidence="9">
    <location>
        <begin position="80"/>
        <end position="90"/>
    </location>
</feature>
<feature type="strand" evidence="9">
    <location>
        <begin position="93"/>
        <end position="99"/>
    </location>
</feature>
<feature type="helix" evidence="9">
    <location>
        <begin position="100"/>
        <end position="107"/>
    </location>
</feature>